<protein>
    <recommendedName>
        <fullName>Aggrecan core protein</fullName>
    </recommendedName>
    <alternativeName>
        <fullName>Cartilage-specific proteoglycan core protein</fullName>
        <shortName>CSPCP</shortName>
    </alternativeName>
</protein>
<reference key="1">
    <citation type="journal article" date="1997" name="Arch. Biochem. Biophys.">
        <title>Complete coding sequence of bovine aggrecan: comparative structural analysis.</title>
        <authorList>
            <person name="Hering T.M."/>
            <person name="Kollar J."/>
            <person name="Huynh T.D."/>
        </authorList>
    </citation>
    <scope>NUCLEOTIDE SEQUENCE [MRNA] (ISOFORM 2)</scope>
</reference>
<reference key="2">
    <citation type="journal article" date="2005" name="Anim. Genet.">
        <title>Characterization of the bovine aggrecan gene: genomic structure and physical and linkage mapping.</title>
        <authorList>
            <person name="Cavanagh J.A.L."/>
            <person name="Tammen I."/>
            <person name="Hayden M.J."/>
            <person name="Gill C.A."/>
            <person name="Nicholas F.W."/>
            <person name="Raadsma H.W."/>
        </authorList>
    </citation>
    <scope>NUCLEOTIDE SEQUENCE [GENOMIC DNA]</scope>
</reference>
<reference key="3">
    <citation type="journal article" date="1989" name="J. Biol. Chem.">
        <title>The keratan sulfate-enriched region of bovine cartilage proteoglycan consists of a consecutively repeated hexapeptide motif.</title>
        <authorList>
            <person name="Antonsson P."/>
            <person name="Heinegaard D."/>
            <person name="Oldberg A."/>
        </authorList>
    </citation>
    <scope>NUCLEOTIDE SEQUENCE [MRNA] OF 563-1056</scope>
</reference>
<reference key="4">
    <citation type="journal article" date="1987" name="Biochem. J.">
        <title>The partial amino acid sequence of bovine cartilage proteoglycan, deduced from a cDNA clone, contains numerous Ser-Gly sequences arranged in homologous repeats.</title>
        <authorList>
            <person name="Oldberg A."/>
            <person name="Antonsson P."/>
            <person name="Heinegaard D."/>
        </authorList>
    </citation>
    <scope>NUCLEOTIDE SEQUENCE [MRNA] OF 1609-2113 AND 2151-2364</scope>
</reference>
<reference key="5">
    <citation type="journal article" date="1993" name="J. Biol. Chem.">
        <title>Expression of alternatively spliced epidermal growth factor-like domains in aggrecans of different species. Evidence for a novel module.</title>
        <authorList>
            <person name="Fueloep C."/>
            <person name="Walcz E."/>
            <person name="Valyon M."/>
            <person name="Glant T.T."/>
        </authorList>
    </citation>
    <scope>NUCLEOTIDE SEQUENCE [MRNA] OF 2114-2150 (ISOFORM 1)</scope>
    <source>
        <tissue>Cartilage</tissue>
    </source>
</reference>
<reference key="6">
    <citation type="journal article" date="1984" name="FEBS Lett.">
        <title>Sequence data concerning the protein core of the cartilage proteoglycan monomers. Characterization of a sequence allowing the synthesis of an oligonucleotide probe.</title>
        <authorList>
            <person name="Perin J.-P."/>
            <person name="Bonnet F."/>
            <person name="Jolles J."/>
            <person name="Jolles P."/>
        </authorList>
    </citation>
    <scope>PARTIAL PROTEIN SEQUENCE</scope>
</reference>
<reference key="7">
    <citation type="journal article" date="1986" name="FEBS Lett.">
        <title>Structural relationship between link proteins and proteoglycan monomers.</title>
        <authorList>
            <person name="Perin J.-P."/>
            <person name="Bonnet F."/>
            <person name="Jolles P."/>
        </authorList>
    </citation>
    <scope>PARTIAL PROTEIN SEQUENCE</scope>
</reference>
<reference key="8">
    <citation type="journal article" date="1991" name="J. Biol. Chem.">
        <title>Analysis of the catabolism of aggrecan in cartilage explants by quantitation of peptides from the three globular domains.</title>
        <authorList>
            <person name="Sandy J.D."/>
            <person name="Boynton R.E."/>
            <person name="Flannery C.R."/>
        </authorList>
    </citation>
    <scope>PROTEIN SEQUENCE OF 152-157; 210-230; 482-506; 566-584; 631-641; 660-684; 2161-2167; 2276-2291; 2298-2307 AND 2318-2334</scope>
</reference>
<reference key="9">
    <citation type="journal article" date="1996" name="J. Biol. Chem.">
        <title>Interaction of cartilage matrix protein with aggrecan. Increased covalent cross-linking with tissue maturation.</title>
        <authorList>
            <person name="Hauser N."/>
            <person name="Paulsson M."/>
            <person name="Heinegard D."/>
            <person name="Moergelin M."/>
        </authorList>
    </citation>
    <scope>INTERACTION WITH MATN1</scope>
</reference>
<organism>
    <name type="scientific">Bos taurus</name>
    <name type="common">Bovine</name>
    <dbReference type="NCBI Taxonomy" id="9913"/>
    <lineage>
        <taxon>Eukaryota</taxon>
        <taxon>Metazoa</taxon>
        <taxon>Chordata</taxon>
        <taxon>Craniata</taxon>
        <taxon>Vertebrata</taxon>
        <taxon>Euteleostomi</taxon>
        <taxon>Mammalia</taxon>
        <taxon>Eutheria</taxon>
        <taxon>Laurasiatheria</taxon>
        <taxon>Artiodactyla</taxon>
        <taxon>Ruminantia</taxon>
        <taxon>Pecora</taxon>
        <taxon>Bovidae</taxon>
        <taxon>Bovinae</taxon>
        <taxon>Bos</taxon>
    </lineage>
</organism>
<accession>P13608</accession>
<accession>P79117</accession>
<accession>Q28159</accession>
<accession>Q6XL66</accession>
<feature type="signal peptide" evidence="6">
    <location>
        <begin position="1"/>
        <end position="16"/>
    </location>
</feature>
<feature type="chain" id="PRO_0000017502" description="Aggrecan core protein">
    <location>
        <begin position="17"/>
        <end position="2364"/>
    </location>
</feature>
<feature type="domain" description="Ig-like V-type">
    <location>
        <begin position="25"/>
        <end position="147"/>
    </location>
</feature>
<feature type="domain" description="Link 1" evidence="11">
    <location>
        <begin position="153"/>
        <end position="248"/>
    </location>
</feature>
<feature type="domain" description="Link 2" evidence="11">
    <location>
        <begin position="254"/>
        <end position="350"/>
    </location>
</feature>
<feature type="domain" description="Link 3" evidence="11">
    <location>
        <begin position="487"/>
        <end position="582"/>
    </location>
</feature>
<feature type="domain" description="Link 4" evidence="11">
    <location>
        <begin position="588"/>
        <end position="684"/>
    </location>
</feature>
<feature type="repeat" description="1">
    <location>
        <begin position="774"/>
        <end position="779"/>
    </location>
</feature>
<feature type="repeat" description="2">
    <location>
        <begin position="780"/>
        <end position="785"/>
    </location>
</feature>
<feature type="repeat" description="3">
    <location>
        <begin position="786"/>
        <end position="791"/>
    </location>
</feature>
<feature type="repeat" description="4">
    <location>
        <begin position="792"/>
        <end position="797"/>
    </location>
</feature>
<feature type="repeat" description="5">
    <location>
        <begin position="798"/>
        <end position="803"/>
    </location>
</feature>
<feature type="repeat" description="6">
    <location>
        <begin position="804"/>
        <end position="809"/>
    </location>
</feature>
<feature type="repeat" description="7">
    <location>
        <begin position="810"/>
        <end position="815"/>
    </location>
</feature>
<feature type="repeat" description="8">
    <location>
        <begin position="816"/>
        <end position="821"/>
    </location>
</feature>
<feature type="repeat" description="9">
    <location>
        <begin position="822"/>
        <end position="827"/>
    </location>
</feature>
<feature type="repeat" description="10">
    <location>
        <begin position="828"/>
        <end position="833"/>
    </location>
</feature>
<feature type="repeat" description="11">
    <location>
        <begin position="834"/>
        <end position="839"/>
    </location>
</feature>
<feature type="repeat" description="12">
    <location>
        <begin position="840"/>
        <end position="845"/>
    </location>
</feature>
<feature type="repeat" description="13">
    <location>
        <begin position="846"/>
        <end position="851"/>
    </location>
</feature>
<feature type="repeat" description="14">
    <location>
        <begin position="852"/>
        <end position="857"/>
    </location>
</feature>
<feature type="repeat" description="15">
    <location>
        <begin position="858"/>
        <end position="863"/>
    </location>
</feature>
<feature type="repeat" description="16">
    <location>
        <begin position="864"/>
        <end position="869"/>
    </location>
</feature>
<feature type="repeat" description="17">
    <location>
        <begin position="870"/>
        <end position="875"/>
    </location>
</feature>
<feature type="repeat" description="18">
    <location>
        <begin position="876"/>
        <end position="881"/>
    </location>
</feature>
<feature type="repeat" description="19">
    <location>
        <begin position="882"/>
        <end position="887"/>
    </location>
</feature>
<feature type="repeat" description="20">
    <location>
        <begin position="888"/>
        <end position="893"/>
    </location>
</feature>
<feature type="repeat" description="21">
    <location>
        <begin position="894"/>
        <end position="899"/>
    </location>
</feature>
<feature type="repeat" description="22">
    <location>
        <begin position="900"/>
        <end position="905"/>
    </location>
</feature>
<feature type="domain" description="EGF-like; calcium-binding" evidence="8">
    <location>
        <begin position="2113"/>
        <end position="2149"/>
    </location>
</feature>
<feature type="domain" description="C-type lectin" evidence="7">
    <location>
        <begin position="2161"/>
        <end position="2276"/>
    </location>
</feature>
<feature type="domain" description="Sushi" evidence="10">
    <location>
        <begin position="2279"/>
        <end position="2339"/>
    </location>
</feature>
<feature type="region of interest" description="Disordered" evidence="12">
    <location>
        <begin position="749"/>
        <end position="1021"/>
    </location>
</feature>
<feature type="region of interest" description="22 X 6 AA tandem repeats of E-[EKGV]-[PL]-[FSI]-[PAT]-[STPL]">
    <location>
        <begin position="774"/>
        <end position="905"/>
    </location>
</feature>
<feature type="region of interest" description="Disordered" evidence="12">
    <location>
        <begin position="1052"/>
        <end position="1293"/>
    </location>
</feature>
<feature type="region of interest" description="Disordered" evidence="12">
    <location>
        <begin position="1321"/>
        <end position="1414"/>
    </location>
</feature>
<feature type="region of interest" description="CS-2">
    <location>
        <begin position="1433"/>
        <end position="2112"/>
    </location>
</feature>
<feature type="region of interest" description="Disordered" evidence="12">
    <location>
        <begin position="1435"/>
        <end position="1466"/>
    </location>
</feature>
<feature type="region of interest" description="Disordered" evidence="12">
    <location>
        <begin position="1528"/>
        <end position="1550"/>
    </location>
</feature>
<feature type="region of interest" description="Disordered" evidence="12">
    <location>
        <begin position="1719"/>
        <end position="1761"/>
    </location>
</feature>
<feature type="region of interest" description="Disordered" evidence="12">
    <location>
        <begin position="1784"/>
        <end position="1870"/>
    </location>
</feature>
<feature type="region of interest" description="Disordered" evidence="12">
    <location>
        <begin position="1906"/>
        <end position="2110"/>
    </location>
</feature>
<feature type="region of interest" description="G3">
    <location>
        <begin position="2114"/>
        <end position="2364"/>
    </location>
</feature>
<feature type="compositionally biased region" description="Pro residues" evidence="12">
    <location>
        <begin position="791"/>
        <end position="811"/>
    </location>
</feature>
<feature type="compositionally biased region" description="Pro residues" evidence="12">
    <location>
        <begin position="821"/>
        <end position="841"/>
    </location>
</feature>
<feature type="compositionally biased region" description="Pro residues" evidence="12">
    <location>
        <begin position="851"/>
        <end position="895"/>
    </location>
</feature>
<feature type="compositionally biased region" description="Low complexity" evidence="12">
    <location>
        <begin position="962"/>
        <end position="973"/>
    </location>
</feature>
<feature type="compositionally biased region" description="Low complexity" evidence="12">
    <location>
        <begin position="1528"/>
        <end position="1542"/>
    </location>
</feature>
<feature type="compositionally biased region" description="Polar residues" evidence="12">
    <location>
        <begin position="1719"/>
        <end position="1729"/>
    </location>
</feature>
<feature type="compositionally biased region" description="Low complexity" evidence="12">
    <location>
        <begin position="1740"/>
        <end position="1758"/>
    </location>
</feature>
<feature type="compositionally biased region" description="Low complexity" evidence="12">
    <location>
        <begin position="1852"/>
        <end position="1867"/>
    </location>
</feature>
<feature type="compositionally biased region" description="Low complexity" evidence="12">
    <location>
        <begin position="1920"/>
        <end position="1960"/>
    </location>
</feature>
<feature type="compositionally biased region" description="Polar residues" evidence="12">
    <location>
        <begin position="2004"/>
        <end position="2024"/>
    </location>
</feature>
<feature type="compositionally biased region" description="Polar residues" evidence="12">
    <location>
        <begin position="2048"/>
        <end position="2063"/>
    </location>
</feature>
<feature type="compositionally biased region" description="Low complexity" evidence="12">
    <location>
        <begin position="2085"/>
        <end position="2096"/>
    </location>
</feature>
<feature type="binding site" evidence="2">
    <location>
        <position position="2215"/>
    </location>
    <ligand>
        <name>Ca(2+)</name>
        <dbReference type="ChEBI" id="CHEBI:29108"/>
        <label>1</label>
    </ligand>
</feature>
<feature type="binding site" evidence="2">
    <location>
        <position position="2219"/>
    </location>
    <ligand>
        <name>Ca(2+)</name>
        <dbReference type="ChEBI" id="CHEBI:29108"/>
        <label>1</label>
    </ligand>
</feature>
<feature type="binding site" evidence="2">
    <location>
        <position position="2239"/>
    </location>
    <ligand>
        <name>Ca(2+)</name>
        <dbReference type="ChEBI" id="CHEBI:29108"/>
        <label>2</label>
    </ligand>
</feature>
<feature type="binding site" evidence="2">
    <location>
        <position position="2241"/>
    </location>
    <ligand>
        <name>Ca(2+)</name>
        <dbReference type="ChEBI" id="CHEBI:29108"/>
        <label>2</label>
    </ligand>
</feature>
<feature type="binding site" evidence="2">
    <location>
        <position position="2242"/>
    </location>
    <ligand>
        <name>Ca(2+)</name>
        <dbReference type="ChEBI" id="CHEBI:29108"/>
        <label>1</label>
    </ligand>
</feature>
<feature type="binding site" evidence="2">
    <location>
        <position position="2248"/>
    </location>
    <ligand>
        <name>Ca(2+)</name>
        <dbReference type="ChEBI" id="CHEBI:29108"/>
        <label>1</label>
    </ligand>
</feature>
<feature type="binding site" evidence="2">
    <location>
        <position position="2248"/>
    </location>
    <ligand>
        <name>Ca(2+)</name>
        <dbReference type="ChEBI" id="CHEBI:29108"/>
        <label>2</label>
    </ligand>
</feature>
<feature type="binding site" evidence="2">
    <location>
        <position position="2249"/>
    </location>
    <ligand>
        <name>Ca(2+)</name>
        <dbReference type="ChEBI" id="CHEBI:29108"/>
        <label>1</label>
    </ligand>
</feature>
<feature type="binding site" evidence="2">
    <location>
        <position position="2262"/>
    </location>
    <ligand>
        <name>Ca(2+)</name>
        <dbReference type="ChEBI" id="CHEBI:29108"/>
        <label>2</label>
    </ligand>
</feature>
<feature type="binding site" evidence="2">
    <location>
        <position position="2263"/>
    </location>
    <ligand>
        <name>Ca(2+)</name>
        <dbReference type="ChEBI" id="CHEBI:29108"/>
        <label>2</label>
    </ligand>
</feature>
<feature type="glycosylation site" description="N-linked (GlcNAc...) asparagine" evidence="6">
    <location>
        <position position="126"/>
    </location>
</feature>
<feature type="glycosylation site" description="N-linked (GlcNAc...) asparagine" evidence="6">
    <location>
        <position position="239"/>
    </location>
</feature>
<feature type="glycosylation site" description="N-linked (GlcNAc...) asparagine" evidence="6">
    <location>
        <position position="333"/>
    </location>
</feature>
<feature type="glycosylation site" description="O-linked (Xyl...) (keratan sulfate) threonine" evidence="1">
    <location>
        <position position="371"/>
    </location>
</feature>
<feature type="glycosylation site" description="O-linked (Xyl...) (keratan sulfate) threonine" evidence="1">
    <location>
        <position position="376"/>
    </location>
</feature>
<feature type="glycosylation site" description="N-linked (GlcNAc...) asparagine" evidence="6">
    <location>
        <position position="387"/>
    </location>
</feature>
<feature type="glycosylation site" description="N-linked (GlcNAc...) asparagine" evidence="6">
    <location>
        <position position="434"/>
    </location>
</feature>
<feature type="glycosylation site" description="N-linked (GlcNAc...) asparagine" evidence="6">
    <location>
        <position position="611"/>
    </location>
</feature>
<feature type="glycosylation site" description="N-linked (GlcNAc...) asparagine" evidence="6">
    <location>
        <position position="667"/>
    </location>
</feature>
<feature type="glycosylation site" description="N-linked (GlcNAc...) asparagine" evidence="6">
    <location>
        <position position="739"/>
    </location>
</feature>
<feature type="glycosylation site" description="O-linked (Xyl...) (chondroitin sulfate) serine" evidence="4">
    <location>
        <position position="1350"/>
    </location>
</feature>
<feature type="glycosylation site" description="O-linked (Xyl...) (chondroitin sulfate) serine" evidence="4">
    <location>
        <position position="1387"/>
    </location>
</feature>
<feature type="glycosylation site" description="O-linked (Xyl...) (chondroitin sulfate) serine" evidence="6">
    <location>
        <position position="1401"/>
    </location>
</feature>
<feature type="glycosylation site" description="O-linked (Xyl...) (chondroitin sulfate) serine" evidence="6">
    <location>
        <position position="1407"/>
    </location>
</feature>
<feature type="glycosylation site" description="O-linked (Xyl...) (chondroitin sulfate) serine" evidence="6">
    <location>
        <position position="1411"/>
    </location>
</feature>
<feature type="glycosylation site" description="O-linked (Xyl...) (chondroitin sulfate) serine" evidence="4">
    <location>
        <position position="1421"/>
    </location>
</feature>
<feature type="glycosylation site" description="O-linked (Xyl...) (chondroitin sulfate) serine" evidence="4">
    <location>
        <position position="1523"/>
    </location>
</feature>
<feature type="glycosylation site" description="N-linked (GlcNAc...) asparagine" evidence="6">
    <location>
        <position position="1961"/>
    </location>
</feature>
<feature type="disulfide bond" evidence="9">
    <location>
        <begin position="51"/>
        <end position="133"/>
    </location>
</feature>
<feature type="disulfide bond" evidence="11">
    <location>
        <begin position="175"/>
        <end position="246"/>
    </location>
</feature>
<feature type="disulfide bond" evidence="11">
    <location>
        <begin position="199"/>
        <end position="220"/>
    </location>
</feature>
<feature type="disulfide bond" evidence="11">
    <location>
        <begin position="273"/>
        <end position="348"/>
    </location>
</feature>
<feature type="disulfide bond" evidence="11">
    <location>
        <begin position="297"/>
        <end position="318"/>
    </location>
</feature>
<feature type="disulfide bond" evidence="11">
    <location>
        <begin position="509"/>
        <end position="580"/>
    </location>
</feature>
<feature type="disulfide bond" evidence="11">
    <location>
        <begin position="533"/>
        <end position="554"/>
    </location>
</feature>
<feature type="disulfide bond" evidence="11">
    <location>
        <begin position="607"/>
        <end position="682"/>
    </location>
</feature>
<feature type="disulfide bond" evidence="11">
    <location>
        <begin position="631"/>
        <end position="652"/>
    </location>
</feature>
<feature type="disulfide bond" evidence="8">
    <location>
        <begin position="2117"/>
        <end position="2128"/>
    </location>
</feature>
<feature type="disulfide bond" evidence="8">
    <location>
        <begin position="2122"/>
        <end position="2137"/>
    </location>
</feature>
<feature type="disulfide bond" evidence="8">
    <location>
        <begin position="2139"/>
        <end position="2148"/>
    </location>
</feature>
<feature type="disulfide bond" evidence="7">
    <location>
        <begin position="2182"/>
        <end position="2274"/>
    </location>
</feature>
<feature type="disulfide bond" evidence="7">
    <location>
        <begin position="2250"/>
        <end position="2266"/>
    </location>
</feature>
<feature type="disulfide bond" evidence="10">
    <location>
        <begin position="2281"/>
        <end position="2324"/>
    </location>
</feature>
<feature type="disulfide bond" evidence="10">
    <location>
        <begin position="2310"/>
        <end position="2337"/>
    </location>
</feature>
<feature type="splice variant" id="VSP_003072" description="In isoform 2." evidence="14">
    <location>
        <begin position="2114"/>
        <end position="2150"/>
    </location>
</feature>
<feature type="sequence conflict" description="In Ref. 8; AA sequence." evidence="15" ref="8">
    <original>SETY</original>
    <variation>QSET</variation>
    <location>
        <begin position="573"/>
        <end position="576"/>
    </location>
</feature>
<sequence length="2364" mass="246362">MTTLLLVFVTLRVITAAISVEVSEPDNSLSVSIPEPSPLRVLLGSSLTIPCYFIDPMHPVTTAPSTAPLAPRIKWSRISKEKEVVLLVATEGRVRVNSAYQDKVTLPNYPAIPSDATLEIQNMRSNDSGILRCEVMHGIEDSQATLEVVVKGIVFHYRAISTRYTLDFDRAQRACLQNSAIIATPEQLQAAYEDGFHQCDAGWLADQTVRYPIHTPREGCYGDKDEFPGVRTYGIRDTNETYDVYCFAEEMEGEVFYATSPEKFTFQEAANECRRLGARLATTGQLYLAWQGGMDMCSAGWLADRSVRYPISKARPNCGGNLLGVRTVYLHANQTGYPDPSSRYDAICYTGEDFVDIPESFFGVGGEEDITIQTVTWPDVELPLPRNITEGEARGSVILTAKPDFEVSPTAPEPEEPFTFVPEVRATAFPEVENRTEEATRPWAFPRESTPGLGAPTAFTSEDLVVQVTLAPGAAEVPGQPRLPGGVVFHYRPGSSRYSLTFEEAKQACLRTGAIIASPEQLQAAYEAGYEQCDAGWLQDQTVRYPIVSPRTPCVGDKDSSPGVRTYGVRPPSETYDVYCYVDRLEGEVFFATRLEQFTFWEAQEFCESQNATLATTGQLYAAWSRGLDKCYAGWLADGSLRYPIVTPRPACGGDKPGVRTVYLYPNQTGLLDPLSRHHAFCFRGVSAAPSPEEEEGSAPTAGPDVEEWMVTQVGPGVAAVPIGEETTAIPGFTVEPENKTEWELAYTPAGTLPLPGIPPTWPPTGEATEEHTEGPSATEVPSASEKPFPSEEPFPPEEPFPSEKPFPPEELFPSEKPFPSEKPFPSEEPFPSEKPFPPEELFPSEKPIPSEEPFPSEEPFPSEKPFPPEEPFPSEKPIPSEEPFPSEKPFPSEEPFPSEEPSTLSAPVPSRTELPSSGEVSGVPEISGDFTGSGEISGHLDFSGQPSGESASGLPSEDLDSSGLTSTVGSGLPVESGLPSGEEERITWTSAPKVDRLPSGGEGPEVSGVEDISGLPSGGEVHLEISASGVEDISGLPSGGEVHLEISASGVEDLSRIPSGEGPEISASGVEDISGLPSGEEGHLEISASGVEDLSGIPSGEGPEVSASGVEDLIGLPSGEGPEVSASGVEDLSRLPSGEGPEVSASGVEDLSGLPSGEGPEVSVSGVEDLSRLPSGEGPEVSASGVEDLSRLPSGEGPEISVSGVEDISILPSGEGPEVSASGVEDLSVLPSGEGHLEISTSGVEDLSVLPSGEGHLETSSGVEDISRLPSGEGPEVSASGVEDLSVLPSGEDHLEISASGVEDLGVLPSGEDHLEISASGVEDISRLPSGEGPEVSASGVEDLSVLPSGEGHLEISASGVEDLSRLPSGGEDHLETSASGVGDLSGLPSGREGLEISASGAGDLSGLTSGKEDLTGSASGALDLGRIPSVTLGSGQAPEASGLPSGFSGEYSGVDLESGPSSGLPDFSGLPSGFPTVSLVDTTLVEVVTATTAGELEGRGTIDISGAGETSGLPFSELDISGGASGLSSGAELSGQASGSPDISGETSGLFGVSGQPSGFPDISGETSGLLEVSGQPSGFYGEISGVTELSGLASGQPEISGEASGILSGLGPPFGITDLSGEAPGIPDLSGQPSGLPEFSGTASGIPDLVSSAVSGSGESSGITFVDTSLVEVTPTTFKEEEGLGSVELSGLPSGELGVSGTSGLADVSGLSSGAIDSSGFTSQPPEFSGLPSGVTEVSGEASGAESGSSLPSGAYDSSGLPSGFPTVSFVDRTLVESVTQAPTAQEAGEGPSGILELSGAPSGAPDMSGDHLGSLDQSGLQSGLVEPSGEPASTPYFSGDFSGTTDVSGESSAATSTSGEASGLPEVTLITSELVEGVTEPTVSQELGQRPPVTYTPQLFESSGEASASGDVPRFPGSGVEVSSVPESSGETSAYPEAEVGASAAPEASGGASGSPNLSETTSTFHEADLEGTSGLGVSGSPSAFPEGPTEGLATPEVSGESTTAFDVSVEASGSPSATPLASGDRTDTSGDLSGHTSGLDIVISTTIPESEWTQQTQRPAEARLEIESSSPVHSGEESQTADTATSPTDASIPASAGGTDDSEATTTDIDECLSSPCLNGATCVDAIDSFTCLCLPSYQGDVCEIQKLCEEGWTKFQGHCYRHFPDRATWVDAESQCRKQQSHLSSIVTPEEQEFVNNNAQDYQWIGLNDKTIEGDFRWSDGHSLQFENWRPNQPDNFFATGEDCVVMIWHEKGEWNDVPCNYQLPFTCKKGTVACGEPPVVEHARIFGQKKDRYEINALVRYQCTEGFIQGHVPTIRCQPSGHWEEPRITCTDPATYKRRLQKRSSRPLRRSHPSTAH</sequence>
<name>PGCA_BOVIN</name>
<evidence type="ECO:0000250" key="1"/>
<evidence type="ECO:0000250" key="2">
    <source>
        <dbReference type="UniProtKB" id="P07897"/>
    </source>
</evidence>
<evidence type="ECO:0000250" key="3">
    <source>
        <dbReference type="UniProtKB" id="P07898"/>
    </source>
</evidence>
<evidence type="ECO:0000250" key="4">
    <source>
        <dbReference type="UniProtKB" id="P16112"/>
    </source>
</evidence>
<evidence type="ECO:0000250" key="5">
    <source>
        <dbReference type="UniProtKB" id="Q61282"/>
    </source>
</evidence>
<evidence type="ECO:0000255" key="6"/>
<evidence type="ECO:0000255" key="7">
    <source>
        <dbReference type="PROSITE-ProRule" id="PRU00040"/>
    </source>
</evidence>
<evidence type="ECO:0000255" key="8">
    <source>
        <dbReference type="PROSITE-ProRule" id="PRU00076"/>
    </source>
</evidence>
<evidence type="ECO:0000255" key="9">
    <source>
        <dbReference type="PROSITE-ProRule" id="PRU00114"/>
    </source>
</evidence>
<evidence type="ECO:0000255" key="10">
    <source>
        <dbReference type="PROSITE-ProRule" id="PRU00302"/>
    </source>
</evidence>
<evidence type="ECO:0000255" key="11">
    <source>
        <dbReference type="PROSITE-ProRule" id="PRU00323"/>
    </source>
</evidence>
<evidence type="ECO:0000256" key="12">
    <source>
        <dbReference type="SAM" id="MobiDB-lite"/>
    </source>
</evidence>
<evidence type="ECO:0000269" key="13">
    <source>
    </source>
</evidence>
<evidence type="ECO:0000303" key="14">
    <source>
    </source>
</evidence>
<evidence type="ECO:0000305" key="15"/>
<keyword id="KW-0025">Alternative splicing</keyword>
<keyword id="KW-0106">Calcium</keyword>
<keyword id="KW-0903">Direct protein sequencing</keyword>
<keyword id="KW-1015">Disulfide bond</keyword>
<keyword id="KW-0245">EGF-like domain</keyword>
<keyword id="KW-0272">Extracellular matrix</keyword>
<keyword id="KW-0325">Glycoprotein</keyword>
<keyword id="KW-0393">Immunoglobulin domain</keyword>
<keyword id="KW-0430">Lectin</keyword>
<keyword id="KW-0479">Metal-binding</keyword>
<keyword id="KW-0654">Proteoglycan</keyword>
<keyword id="KW-1185">Reference proteome</keyword>
<keyword id="KW-0677">Repeat</keyword>
<keyword id="KW-0964">Secreted</keyword>
<keyword id="KW-0732">Signal</keyword>
<keyword id="KW-0768">Sushi</keyword>
<gene>
    <name type="primary">ACAN</name>
    <name type="synonym">AGC1</name>
</gene>
<dbReference type="EMBL" id="U76615">
    <property type="protein sequence ID" value="AAB38524.1"/>
    <property type="molecule type" value="mRNA"/>
</dbReference>
<dbReference type="EMBL" id="AY226875">
    <property type="protein sequence ID" value="AAP44492.1"/>
    <property type="molecule type" value="Genomic_DNA"/>
</dbReference>
<dbReference type="EMBL" id="AY226858">
    <property type="protein sequence ID" value="AAP44492.1"/>
    <property type="status" value="JOINED"/>
    <property type="molecule type" value="Genomic_DNA"/>
</dbReference>
<dbReference type="EMBL" id="AY226859">
    <property type="protein sequence ID" value="AAP44492.1"/>
    <property type="status" value="JOINED"/>
    <property type="molecule type" value="Genomic_DNA"/>
</dbReference>
<dbReference type="EMBL" id="AY226860">
    <property type="protein sequence ID" value="AAP44492.1"/>
    <property type="status" value="JOINED"/>
    <property type="molecule type" value="Genomic_DNA"/>
</dbReference>
<dbReference type="EMBL" id="AY226861">
    <property type="protein sequence ID" value="AAP44492.1"/>
    <property type="status" value="JOINED"/>
    <property type="molecule type" value="Genomic_DNA"/>
</dbReference>
<dbReference type="EMBL" id="AY226862">
    <property type="protein sequence ID" value="AAP44492.1"/>
    <property type="status" value="JOINED"/>
    <property type="molecule type" value="Genomic_DNA"/>
</dbReference>
<dbReference type="EMBL" id="AY226863">
    <property type="protein sequence ID" value="AAP44492.1"/>
    <property type="status" value="JOINED"/>
    <property type="molecule type" value="Genomic_DNA"/>
</dbReference>
<dbReference type="EMBL" id="AY226864">
    <property type="protein sequence ID" value="AAP44492.1"/>
    <property type="status" value="JOINED"/>
    <property type="molecule type" value="Genomic_DNA"/>
</dbReference>
<dbReference type="EMBL" id="AY226865">
    <property type="protein sequence ID" value="AAP44492.1"/>
    <property type="status" value="JOINED"/>
    <property type="molecule type" value="Genomic_DNA"/>
</dbReference>
<dbReference type="EMBL" id="AY226866">
    <property type="protein sequence ID" value="AAP44492.1"/>
    <property type="status" value="JOINED"/>
    <property type="molecule type" value="Genomic_DNA"/>
</dbReference>
<dbReference type="EMBL" id="AY226867">
    <property type="protein sequence ID" value="AAP44492.1"/>
    <property type="status" value="JOINED"/>
    <property type="molecule type" value="Genomic_DNA"/>
</dbReference>
<dbReference type="EMBL" id="AY226868">
    <property type="protein sequence ID" value="AAP44492.1"/>
    <property type="status" value="JOINED"/>
    <property type="molecule type" value="Genomic_DNA"/>
</dbReference>
<dbReference type="EMBL" id="AY226871">
    <property type="protein sequence ID" value="AAP44492.1"/>
    <property type="status" value="JOINED"/>
    <property type="molecule type" value="Genomic_DNA"/>
</dbReference>
<dbReference type="EMBL" id="AY226872">
    <property type="protein sequence ID" value="AAP44492.1"/>
    <property type="status" value="JOINED"/>
    <property type="molecule type" value="Genomic_DNA"/>
</dbReference>
<dbReference type="EMBL" id="AY226873">
    <property type="protein sequence ID" value="AAP44492.1"/>
    <property type="status" value="JOINED"/>
    <property type="molecule type" value="Genomic_DNA"/>
</dbReference>
<dbReference type="EMBL" id="AY226874">
    <property type="protein sequence ID" value="AAP44492.1"/>
    <property type="status" value="JOINED"/>
    <property type="molecule type" value="Genomic_DNA"/>
</dbReference>
<dbReference type="EMBL" id="L07053">
    <property type="status" value="NOT_ANNOTATED_CDS"/>
    <property type="molecule type" value="mRNA"/>
</dbReference>
<dbReference type="PIR" id="A29164">
    <property type="entry name" value="A29164"/>
</dbReference>
<dbReference type="PIR" id="A34234">
    <property type="entry name" value="A39808"/>
</dbReference>
<dbReference type="PIR" id="B29164">
    <property type="entry name" value="B29164"/>
</dbReference>
<dbReference type="PIR" id="S74144">
    <property type="entry name" value="S74144"/>
</dbReference>
<dbReference type="PIR" id="T42630">
    <property type="entry name" value="T42630"/>
</dbReference>
<dbReference type="RefSeq" id="NP_776406.1">
    <property type="nucleotide sequence ID" value="NM_173981.2"/>
</dbReference>
<dbReference type="SMR" id="P13608"/>
<dbReference type="FunCoup" id="P13608">
    <property type="interactions" value="230"/>
</dbReference>
<dbReference type="IntAct" id="P13608">
    <property type="interactions" value="3"/>
</dbReference>
<dbReference type="STRING" id="9913.ENSBTAP00000021512"/>
<dbReference type="BindingDB" id="P13608"/>
<dbReference type="ChEMBL" id="CHEMBL4295716"/>
<dbReference type="GlyCosmos" id="P13608">
    <property type="glycosylation" value="8 sites, No reported glycans"/>
</dbReference>
<dbReference type="GlyGen" id="P13608">
    <property type="glycosylation" value="15 sites"/>
</dbReference>
<dbReference type="PaxDb" id="9913-ENSBTAP00000021512"/>
<dbReference type="PeptideAtlas" id="P13608"/>
<dbReference type="GeneID" id="280985"/>
<dbReference type="KEGG" id="bta:280985"/>
<dbReference type="CTD" id="176"/>
<dbReference type="eggNOG" id="ENOG502QUX8">
    <property type="taxonomic scope" value="Eukaryota"/>
</dbReference>
<dbReference type="InParanoid" id="P13608"/>
<dbReference type="OrthoDB" id="418245at2759"/>
<dbReference type="Proteomes" id="UP000009136">
    <property type="component" value="Unplaced"/>
</dbReference>
<dbReference type="GO" id="GO:0005576">
    <property type="term" value="C:extracellular region"/>
    <property type="evidence" value="ECO:0000304"/>
    <property type="project" value="Reactome"/>
</dbReference>
<dbReference type="GO" id="GO:0005615">
    <property type="term" value="C:extracellular space"/>
    <property type="evidence" value="ECO:0000318"/>
    <property type="project" value="GO_Central"/>
</dbReference>
<dbReference type="GO" id="GO:0072534">
    <property type="term" value="C:perineuronal net"/>
    <property type="evidence" value="ECO:0000318"/>
    <property type="project" value="GO_Central"/>
</dbReference>
<dbReference type="GO" id="GO:0045202">
    <property type="term" value="C:synapse"/>
    <property type="evidence" value="ECO:0000318"/>
    <property type="project" value="GO_Central"/>
</dbReference>
<dbReference type="GO" id="GO:0005509">
    <property type="term" value="F:calcium ion binding"/>
    <property type="evidence" value="ECO:0007669"/>
    <property type="project" value="InterPro"/>
</dbReference>
<dbReference type="GO" id="GO:0030246">
    <property type="term" value="F:carbohydrate binding"/>
    <property type="evidence" value="ECO:0007669"/>
    <property type="project" value="UniProtKB-KW"/>
</dbReference>
<dbReference type="GO" id="GO:0005540">
    <property type="term" value="F:hyaluronic acid binding"/>
    <property type="evidence" value="ECO:0007669"/>
    <property type="project" value="InterPro"/>
</dbReference>
<dbReference type="GO" id="GO:0007155">
    <property type="term" value="P:cell adhesion"/>
    <property type="evidence" value="ECO:0007669"/>
    <property type="project" value="InterPro"/>
</dbReference>
<dbReference type="GO" id="GO:0007417">
    <property type="term" value="P:central nervous system development"/>
    <property type="evidence" value="ECO:0000318"/>
    <property type="project" value="GO_Central"/>
</dbReference>
<dbReference type="GO" id="GO:0001501">
    <property type="term" value="P:skeletal system development"/>
    <property type="evidence" value="ECO:0000318"/>
    <property type="project" value="GO_Central"/>
</dbReference>
<dbReference type="CDD" id="cd00033">
    <property type="entry name" value="CCP"/>
    <property type="match status" value="1"/>
</dbReference>
<dbReference type="CDD" id="cd03588">
    <property type="entry name" value="CLECT_CSPGs"/>
    <property type="match status" value="1"/>
</dbReference>
<dbReference type="CDD" id="cd00054">
    <property type="entry name" value="EGF_CA"/>
    <property type="match status" value="1"/>
</dbReference>
<dbReference type="CDD" id="cd05900">
    <property type="entry name" value="Ig_Aggrecan"/>
    <property type="match status" value="1"/>
</dbReference>
<dbReference type="CDD" id="cd03517">
    <property type="entry name" value="Link_domain_CSPGs_modules_1_3"/>
    <property type="match status" value="2"/>
</dbReference>
<dbReference type="CDD" id="cd03520">
    <property type="entry name" value="Link_domain_CSPGs_modules_2_4"/>
    <property type="match status" value="2"/>
</dbReference>
<dbReference type="FunFam" id="3.10.100.10:FF:000009">
    <property type="entry name" value="Aggrecan core protein"/>
    <property type="match status" value="1"/>
</dbReference>
<dbReference type="FunFam" id="3.10.100.10:FF:000011">
    <property type="entry name" value="Aggrecan core protein"/>
    <property type="match status" value="1"/>
</dbReference>
<dbReference type="FunFam" id="2.60.40.10:FF:000451">
    <property type="entry name" value="aggrecan core protein"/>
    <property type="match status" value="1"/>
</dbReference>
<dbReference type="FunFam" id="3.10.100.10:FF:000002">
    <property type="entry name" value="Hyaluronan proteoglycan link protein 1"/>
    <property type="match status" value="2"/>
</dbReference>
<dbReference type="FunFam" id="2.10.25.10:FF:000327">
    <property type="entry name" value="neurogenic locus notch homolog protein 4"/>
    <property type="match status" value="1"/>
</dbReference>
<dbReference type="FunFam" id="2.10.70.10:FF:000003">
    <property type="entry name" value="Versican core protein"/>
    <property type="match status" value="1"/>
</dbReference>
<dbReference type="FunFam" id="3.10.100.10:FF:000003">
    <property type="entry name" value="Versican core protein"/>
    <property type="match status" value="1"/>
</dbReference>
<dbReference type="Gene3D" id="2.10.70.10">
    <property type="entry name" value="Complement Module, domain 1"/>
    <property type="match status" value="1"/>
</dbReference>
<dbReference type="Gene3D" id="2.60.40.10">
    <property type="entry name" value="Immunoglobulins"/>
    <property type="match status" value="1"/>
</dbReference>
<dbReference type="Gene3D" id="2.10.25.10">
    <property type="entry name" value="Laminin"/>
    <property type="match status" value="1"/>
</dbReference>
<dbReference type="Gene3D" id="3.10.100.10">
    <property type="entry name" value="Mannose-Binding Protein A, subunit A"/>
    <property type="match status" value="5"/>
</dbReference>
<dbReference type="InterPro" id="IPR001304">
    <property type="entry name" value="C-type_lectin-like"/>
</dbReference>
<dbReference type="InterPro" id="IPR016186">
    <property type="entry name" value="C-type_lectin-like/link_sf"/>
</dbReference>
<dbReference type="InterPro" id="IPR018378">
    <property type="entry name" value="C-type_lectin_CS"/>
</dbReference>
<dbReference type="InterPro" id="IPR033987">
    <property type="entry name" value="CSPG_CTLD"/>
</dbReference>
<dbReference type="InterPro" id="IPR016187">
    <property type="entry name" value="CTDL_fold"/>
</dbReference>
<dbReference type="InterPro" id="IPR001881">
    <property type="entry name" value="EGF-like_Ca-bd_dom"/>
</dbReference>
<dbReference type="InterPro" id="IPR000742">
    <property type="entry name" value="EGF-like_dom"/>
</dbReference>
<dbReference type="InterPro" id="IPR000152">
    <property type="entry name" value="EGF-type_Asp/Asn_hydroxyl_site"/>
</dbReference>
<dbReference type="InterPro" id="IPR018097">
    <property type="entry name" value="EGF_Ca-bd_CS"/>
</dbReference>
<dbReference type="InterPro" id="IPR050691">
    <property type="entry name" value="Hyaluronan_bind_Proteoglycan"/>
</dbReference>
<dbReference type="InterPro" id="IPR007110">
    <property type="entry name" value="Ig-like_dom"/>
</dbReference>
<dbReference type="InterPro" id="IPR036179">
    <property type="entry name" value="Ig-like_dom_sf"/>
</dbReference>
<dbReference type="InterPro" id="IPR013783">
    <property type="entry name" value="Ig-like_fold"/>
</dbReference>
<dbReference type="InterPro" id="IPR003599">
    <property type="entry name" value="Ig_sub"/>
</dbReference>
<dbReference type="InterPro" id="IPR013106">
    <property type="entry name" value="Ig_V-set"/>
</dbReference>
<dbReference type="InterPro" id="IPR000538">
    <property type="entry name" value="Link_dom"/>
</dbReference>
<dbReference type="InterPro" id="IPR035976">
    <property type="entry name" value="Sushi/SCR/CCP_sf"/>
</dbReference>
<dbReference type="InterPro" id="IPR000436">
    <property type="entry name" value="Sushi_SCR_CCP_dom"/>
</dbReference>
<dbReference type="PANTHER" id="PTHR22804:SF42">
    <property type="entry name" value="AGGRECAN CORE PROTEIN"/>
    <property type="match status" value="1"/>
</dbReference>
<dbReference type="PANTHER" id="PTHR22804">
    <property type="entry name" value="AGGRECAN/VERSICAN PROTEOGLYCAN"/>
    <property type="match status" value="1"/>
</dbReference>
<dbReference type="Pfam" id="PF00008">
    <property type="entry name" value="EGF"/>
    <property type="match status" value="1"/>
</dbReference>
<dbReference type="Pfam" id="PF00059">
    <property type="entry name" value="Lectin_C"/>
    <property type="match status" value="1"/>
</dbReference>
<dbReference type="Pfam" id="PF00084">
    <property type="entry name" value="Sushi"/>
    <property type="match status" value="1"/>
</dbReference>
<dbReference type="Pfam" id="PF07686">
    <property type="entry name" value="V-set"/>
    <property type="match status" value="1"/>
</dbReference>
<dbReference type="Pfam" id="PF00193">
    <property type="entry name" value="Xlink"/>
    <property type="match status" value="4"/>
</dbReference>
<dbReference type="PRINTS" id="PR01265">
    <property type="entry name" value="LINKMODULE"/>
</dbReference>
<dbReference type="SMART" id="SM00032">
    <property type="entry name" value="CCP"/>
    <property type="match status" value="1"/>
</dbReference>
<dbReference type="SMART" id="SM00034">
    <property type="entry name" value="CLECT"/>
    <property type="match status" value="1"/>
</dbReference>
<dbReference type="SMART" id="SM00181">
    <property type="entry name" value="EGF"/>
    <property type="match status" value="1"/>
</dbReference>
<dbReference type="SMART" id="SM00179">
    <property type="entry name" value="EGF_CA"/>
    <property type="match status" value="1"/>
</dbReference>
<dbReference type="SMART" id="SM00409">
    <property type="entry name" value="IG"/>
    <property type="match status" value="1"/>
</dbReference>
<dbReference type="SMART" id="SM00406">
    <property type="entry name" value="IGv"/>
    <property type="match status" value="1"/>
</dbReference>
<dbReference type="SMART" id="SM00445">
    <property type="entry name" value="LINK"/>
    <property type="match status" value="4"/>
</dbReference>
<dbReference type="SUPFAM" id="SSF56436">
    <property type="entry name" value="C-type lectin-like"/>
    <property type="match status" value="5"/>
</dbReference>
<dbReference type="SUPFAM" id="SSF57535">
    <property type="entry name" value="Complement control module/SCR domain"/>
    <property type="match status" value="1"/>
</dbReference>
<dbReference type="SUPFAM" id="SSF57196">
    <property type="entry name" value="EGF/Laminin"/>
    <property type="match status" value="1"/>
</dbReference>
<dbReference type="SUPFAM" id="SSF48726">
    <property type="entry name" value="Immunoglobulin"/>
    <property type="match status" value="1"/>
</dbReference>
<dbReference type="PROSITE" id="PS00010">
    <property type="entry name" value="ASX_HYDROXYL"/>
    <property type="match status" value="1"/>
</dbReference>
<dbReference type="PROSITE" id="PS00615">
    <property type="entry name" value="C_TYPE_LECTIN_1"/>
    <property type="match status" value="1"/>
</dbReference>
<dbReference type="PROSITE" id="PS50041">
    <property type="entry name" value="C_TYPE_LECTIN_2"/>
    <property type="match status" value="1"/>
</dbReference>
<dbReference type="PROSITE" id="PS00022">
    <property type="entry name" value="EGF_1"/>
    <property type="match status" value="1"/>
</dbReference>
<dbReference type="PROSITE" id="PS50026">
    <property type="entry name" value="EGF_3"/>
    <property type="match status" value="1"/>
</dbReference>
<dbReference type="PROSITE" id="PS01187">
    <property type="entry name" value="EGF_CA"/>
    <property type="match status" value="1"/>
</dbReference>
<dbReference type="PROSITE" id="PS50835">
    <property type="entry name" value="IG_LIKE"/>
    <property type="match status" value="1"/>
</dbReference>
<dbReference type="PROSITE" id="PS01241">
    <property type="entry name" value="LINK_1"/>
    <property type="match status" value="4"/>
</dbReference>
<dbReference type="PROSITE" id="PS50963">
    <property type="entry name" value="LINK_2"/>
    <property type="match status" value="4"/>
</dbReference>
<dbReference type="PROSITE" id="PS50923">
    <property type="entry name" value="SUSHI"/>
    <property type="match status" value="1"/>
</dbReference>
<comment type="function">
    <text>This proteoglycan is a major component of extracellular matrix of cartilagenous tissues. A major function of this protein is to resist compression in cartilage. It binds avidly to hyaluronic acid via an N-terminal globular region. May play a regulatory role in the matrix assembly of the cartilage.</text>
</comment>
<comment type="subunit">
    <text evidence="4 5 13">Forms a complex (via covalent bonds) with MATN1; the interaction increases with age of the organism via an increase in occupancy of MATN1 binding sites (PubMed:8943283). Interacts with FBLN1 (By similarity). Interacts with COMP (By similarity).</text>
</comment>
<comment type="interaction">
    <interactant intactId="EBI-6259246">
        <id>P13608</id>
    </interactant>
    <interactant intactId="EBI-2808663">
        <id>Q9UNA0</id>
        <label>ADAMTS5</label>
    </interactant>
    <organismsDiffer>true</organismsDiffer>
    <experiments>2</experiments>
</comment>
<comment type="interaction">
    <interactant intactId="EBI-6259246">
        <id>P13608</id>
    </interactant>
    <interactant intactId="EBI-2531022">
        <id>P49747</id>
        <label>COMP</label>
    </interactant>
    <organismsDiffer>true</organismsDiffer>
    <experiments>2</experiments>
</comment>
<comment type="subcellular location">
    <subcellularLocation>
        <location evidence="3">Secreted</location>
        <location evidence="3">Extracellular space</location>
        <location evidence="3">Extracellular matrix</location>
    </subcellularLocation>
</comment>
<comment type="alternative products">
    <event type="alternative splicing"/>
    <isoform>
        <id>P13608-1</id>
        <name>1</name>
        <sequence type="displayed"/>
    </isoform>
    <isoform>
        <id>P13608-2</id>
        <name>2</name>
        <sequence type="described" ref="VSP_003072"/>
    </isoform>
</comment>
<comment type="domain">
    <text>Two globular domains, G1 and G2, comprise the N-terminus of the proteoglycan, while another globular region, G3, makes up the C-terminus. G1 contains Link domains and thus consists of three disulfide-bonded loop structures designated as the A, B, B' motifs. G2 is similar to G1. The keratan sulfate (KS) and the chondroitin sulfate (CS) attachment domains lie between G2 and G3.</text>
</comment>
<comment type="PTM">
    <text>Contains mostly chondroitin sulfate, but also N-linked and O-linked (about 40) oligosaccharides.</text>
</comment>
<comment type="PTM">
    <text>The keratan sulfate contents differ considerably between adult and fetal bovine proteoglycans.</text>
</comment>
<comment type="similarity">
    <text evidence="15">Belongs to the aggrecan/versican proteoglycan family.</text>
</comment>
<proteinExistence type="evidence at protein level"/>